<dbReference type="EMBL" id="L11275">
    <property type="protein sequence ID" value="AAA35091.1"/>
    <property type="molecule type" value="Genomic_DNA"/>
</dbReference>
<dbReference type="EMBL" id="X73541">
    <property type="protein sequence ID" value="CAA51946.1"/>
    <property type="molecule type" value="Genomic_DNA"/>
</dbReference>
<dbReference type="EMBL" id="Z28317">
    <property type="protein sequence ID" value="CAA82171.1"/>
    <property type="molecule type" value="Genomic_DNA"/>
</dbReference>
<dbReference type="EMBL" id="BK006944">
    <property type="protein sequence ID" value="DAA09242.1"/>
    <property type="molecule type" value="Genomic_DNA"/>
</dbReference>
<dbReference type="PIR" id="S38170">
    <property type="entry name" value="S38170"/>
</dbReference>
<dbReference type="RefSeq" id="NP_013018.3">
    <property type="nucleotide sequence ID" value="NM_001179882.3"/>
</dbReference>
<dbReference type="BioGRID" id="34223">
    <property type="interactions" value="283"/>
</dbReference>
<dbReference type="DIP" id="DIP-2115N"/>
<dbReference type="FunCoup" id="P32583">
    <property type="interactions" value="323"/>
</dbReference>
<dbReference type="IntAct" id="P32583">
    <property type="interactions" value="35"/>
</dbReference>
<dbReference type="MINT" id="P32583"/>
<dbReference type="STRING" id="4932.YKR092C"/>
<dbReference type="GlyGen" id="P32583">
    <property type="glycosylation" value="1 site"/>
</dbReference>
<dbReference type="iPTMnet" id="P32583"/>
<dbReference type="PaxDb" id="4932-YKR092C"/>
<dbReference type="PeptideAtlas" id="P32583"/>
<dbReference type="EnsemblFungi" id="YKR092C_mRNA">
    <property type="protein sequence ID" value="YKR092C"/>
    <property type="gene ID" value="YKR092C"/>
</dbReference>
<dbReference type="GeneID" id="853967"/>
<dbReference type="KEGG" id="sce:YKR092C"/>
<dbReference type="AGR" id="SGD:S000001800"/>
<dbReference type="SGD" id="S000001800">
    <property type="gene designation" value="SRP40"/>
</dbReference>
<dbReference type="VEuPathDB" id="FungiDB:YKR092C"/>
<dbReference type="eggNOG" id="KOG2992">
    <property type="taxonomic scope" value="Eukaryota"/>
</dbReference>
<dbReference type="HOGENOM" id="CLU_781095_0_0_1"/>
<dbReference type="InParanoid" id="P32583"/>
<dbReference type="OMA" id="ENNSGME"/>
<dbReference type="OrthoDB" id="5599646at2759"/>
<dbReference type="BioCyc" id="YEAST:G3O-32055-MONOMER"/>
<dbReference type="BioGRID-ORCS" id="853967">
    <property type="hits" value="3 hits in 10 CRISPR screens"/>
</dbReference>
<dbReference type="CD-CODE" id="BDAE0F88">
    <property type="entry name" value="Nucleolus"/>
</dbReference>
<dbReference type="PRO" id="PR:P32583"/>
<dbReference type="Proteomes" id="UP000002311">
    <property type="component" value="Chromosome XI"/>
</dbReference>
<dbReference type="RNAct" id="P32583">
    <property type="molecule type" value="protein"/>
</dbReference>
<dbReference type="GO" id="GO:0005730">
    <property type="term" value="C:nucleolus"/>
    <property type="evidence" value="ECO:0000314"/>
    <property type="project" value="SGD"/>
</dbReference>
<dbReference type="GO" id="GO:0005654">
    <property type="term" value="C:nucleoplasm"/>
    <property type="evidence" value="ECO:0000318"/>
    <property type="project" value="GO_Central"/>
</dbReference>
<dbReference type="GO" id="GO:0006913">
    <property type="term" value="P:nucleocytoplasmic transport"/>
    <property type="evidence" value="ECO:0000250"/>
    <property type="project" value="SGD"/>
</dbReference>
<dbReference type="InterPro" id="IPR007718">
    <property type="entry name" value="Srp40_C"/>
</dbReference>
<dbReference type="Pfam" id="PF05022">
    <property type="entry name" value="SRP40_C"/>
    <property type="match status" value="1"/>
</dbReference>
<reference key="1">
    <citation type="journal article" date="1993" name="Proc. Natl. Acad. Sci. U.S.A.">
        <title>Interactions between three common subunits of yeast RNA polymerases I and III.</title>
        <authorList>
            <person name="Lalo D."/>
            <person name="Carles C."/>
            <person name="Sentenac A."/>
            <person name="Thuriaux P."/>
        </authorList>
    </citation>
    <scope>NUCLEOTIDE SEQUENCE [GENOMIC DNA]</scope>
    <source>
        <strain>ATCC 28383 / FL100 / VTT C-80102</strain>
    </source>
</reference>
<reference key="2">
    <citation type="journal article" date="1993" name="Yeast">
        <title>The complete sequence of a 15,820 bp segment of Saccharomyces cerevisiae chromosome XI contains the UBI2 and MPL1 genes and three new open reading frames.</title>
        <authorList>
            <person name="Bou G."/>
            <person name="Esteban P.F."/>
            <person name="Baladron V."/>
            <person name="Gonzalez G.A."/>
            <person name="Cantalejo J.G."/>
            <person name="Remacha M.A."/>
            <person name="Jimenez A."/>
            <person name="del Rey F."/>
            <person name="Ballesta J.P.G."/>
            <person name="Revuelta J.L."/>
        </authorList>
    </citation>
    <scope>NUCLEOTIDE SEQUENCE [GENOMIC DNA]</scope>
</reference>
<reference key="3">
    <citation type="journal article" date="1994" name="Nature">
        <title>Complete DNA sequence of yeast chromosome XI.</title>
        <authorList>
            <person name="Dujon B."/>
            <person name="Alexandraki D."/>
            <person name="Andre B."/>
            <person name="Ansorge W."/>
            <person name="Baladron V."/>
            <person name="Ballesta J.P.G."/>
            <person name="Banrevi A."/>
            <person name="Bolle P.-A."/>
            <person name="Bolotin-Fukuhara M."/>
            <person name="Bossier P."/>
            <person name="Bou G."/>
            <person name="Boyer J."/>
            <person name="Buitrago M.J."/>
            <person name="Cheret G."/>
            <person name="Colleaux L."/>
            <person name="Daignan-Fornier B."/>
            <person name="del Rey F."/>
            <person name="Dion C."/>
            <person name="Domdey H."/>
            <person name="Duesterhoeft A."/>
            <person name="Duesterhus S."/>
            <person name="Entian K.-D."/>
            <person name="Erfle H."/>
            <person name="Esteban P.F."/>
            <person name="Feldmann H."/>
            <person name="Fernandes L."/>
            <person name="Fobo G.M."/>
            <person name="Fritz C."/>
            <person name="Fukuhara H."/>
            <person name="Gabel C."/>
            <person name="Gaillon L."/>
            <person name="Garcia-Cantalejo J.M."/>
            <person name="Garcia-Ramirez J.J."/>
            <person name="Gent M.E."/>
            <person name="Ghazvini M."/>
            <person name="Goffeau A."/>
            <person name="Gonzalez A."/>
            <person name="Grothues D."/>
            <person name="Guerreiro P."/>
            <person name="Hegemann J.H."/>
            <person name="Hewitt N."/>
            <person name="Hilger F."/>
            <person name="Hollenberg C.P."/>
            <person name="Horaitis O."/>
            <person name="Indge K.J."/>
            <person name="Jacquier A."/>
            <person name="James C.M."/>
            <person name="Jauniaux J.-C."/>
            <person name="Jimenez A."/>
            <person name="Keuchel H."/>
            <person name="Kirchrath L."/>
            <person name="Kleine K."/>
            <person name="Koetter P."/>
            <person name="Legrain P."/>
            <person name="Liebl S."/>
            <person name="Louis E.J."/>
            <person name="Maia e Silva A."/>
            <person name="Marck C."/>
            <person name="Monnier A.-L."/>
            <person name="Moestl D."/>
            <person name="Mueller S."/>
            <person name="Obermaier B."/>
            <person name="Oliver S.G."/>
            <person name="Pallier C."/>
            <person name="Pascolo S."/>
            <person name="Pfeiffer F."/>
            <person name="Philippsen P."/>
            <person name="Planta R.J."/>
            <person name="Pohl F.M."/>
            <person name="Pohl T.M."/>
            <person name="Poehlmann R."/>
            <person name="Portetelle D."/>
            <person name="Purnelle B."/>
            <person name="Puzos V."/>
            <person name="Ramezani Rad M."/>
            <person name="Rasmussen S.W."/>
            <person name="Remacha M.A."/>
            <person name="Revuelta J.L."/>
            <person name="Richard G.-F."/>
            <person name="Rieger M."/>
            <person name="Rodrigues-Pousada C."/>
            <person name="Rose M."/>
            <person name="Rupp T."/>
            <person name="Santos M.A."/>
            <person name="Schwager C."/>
            <person name="Sensen C."/>
            <person name="Skala J."/>
            <person name="Soares H."/>
            <person name="Sor F."/>
            <person name="Stegemann J."/>
            <person name="Tettelin H."/>
            <person name="Thierry A."/>
            <person name="Tzermia M."/>
            <person name="Urrestarazu L.A."/>
            <person name="van Dyck L."/>
            <person name="van Vliet-Reedijk J.C."/>
            <person name="Valens M."/>
            <person name="Vandenbol M."/>
            <person name="Vilela C."/>
            <person name="Vissers S."/>
            <person name="von Wettstein D."/>
            <person name="Voss H."/>
            <person name="Wiemann S."/>
            <person name="Xu G."/>
            <person name="Zimmermann J."/>
            <person name="Haasemann M."/>
            <person name="Becker I."/>
            <person name="Mewes H.-W."/>
        </authorList>
    </citation>
    <scope>NUCLEOTIDE SEQUENCE [LARGE SCALE GENOMIC DNA]</scope>
    <source>
        <strain>ATCC 204508 / S288c</strain>
    </source>
</reference>
<reference key="4">
    <citation type="journal article" date="2014" name="G3 (Bethesda)">
        <title>The reference genome sequence of Saccharomyces cerevisiae: Then and now.</title>
        <authorList>
            <person name="Engel S.R."/>
            <person name="Dietrich F.S."/>
            <person name="Fisk D.G."/>
            <person name="Binkley G."/>
            <person name="Balakrishnan R."/>
            <person name="Costanzo M.C."/>
            <person name="Dwight S.S."/>
            <person name="Hitz B.C."/>
            <person name="Karra K."/>
            <person name="Nash R.S."/>
            <person name="Weng S."/>
            <person name="Wong E.D."/>
            <person name="Lloyd P."/>
            <person name="Skrzypek M.S."/>
            <person name="Miyasato S.R."/>
            <person name="Simison M."/>
            <person name="Cherry J.M."/>
        </authorList>
    </citation>
    <scope>GENOME REANNOTATION</scope>
    <source>
        <strain>ATCC 204508 / S288c</strain>
    </source>
</reference>
<reference key="5">
    <citation type="journal article" date="2003" name="Nature">
        <title>Global analysis of protein expression in yeast.</title>
        <authorList>
            <person name="Ghaemmaghami S."/>
            <person name="Huh W.-K."/>
            <person name="Bower K."/>
            <person name="Howson R.W."/>
            <person name="Belle A."/>
            <person name="Dephoure N."/>
            <person name="O'Shea E.K."/>
            <person name="Weissman J.S."/>
        </authorList>
    </citation>
    <scope>LEVEL OF PROTEIN EXPRESSION [LARGE SCALE ANALYSIS]</scope>
</reference>
<reference key="6">
    <citation type="journal article" date="2007" name="J. Proteome Res.">
        <title>Large-scale phosphorylation analysis of alpha-factor-arrested Saccharomyces cerevisiae.</title>
        <authorList>
            <person name="Li X."/>
            <person name="Gerber S.A."/>
            <person name="Rudner A.D."/>
            <person name="Beausoleil S.A."/>
            <person name="Haas W."/>
            <person name="Villen J."/>
            <person name="Elias J.E."/>
            <person name="Gygi S.P."/>
        </authorList>
    </citation>
    <scope>PHOSPHORYLATION [LARGE SCALE ANALYSIS] AT THR-289</scope>
    <scope>IDENTIFICATION BY MASS SPECTROMETRY [LARGE SCALE ANALYSIS]</scope>
    <source>
        <strain>ADR376</strain>
    </source>
</reference>
<reference key="7">
    <citation type="journal article" date="2007" name="Proc. Natl. Acad. Sci. U.S.A.">
        <title>Analysis of phosphorylation sites on proteins from Saccharomyces cerevisiae by electron transfer dissociation (ETD) mass spectrometry.</title>
        <authorList>
            <person name="Chi A."/>
            <person name="Huttenhower C."/>
            <person name="Geer L.Y."/>
            <person name="Coon J.J."/>
            <person name="Syka J.E.P."/>
            <person name="Bai D.L."/>
            <person name="Shabanowitz J."/>
            <person name="Burke D.J."/>
            <person name="Troyanskaya O.G."/>
            <person name="Hunt D.F."/>
        </authorList>
    </citation>
    <scope>PHOSPHORYLATION [LARGE SCALE ANALYSIS] AT SER-133 AND SER-394</scope>
    <scope>IDENTIFICATION BY MASS SPECTROMETRY [LARGE SCALE ANALYSIS]</scope>
</reference>
<reference key="8">
    <citation type="journal article" date="2008" name="Mol. Cell. Proteomics">
        <title>A multidimensional chromatography technology for in-depth phosphoproteome analysis.</title>
        <authorList>
            <person name="Albuquerque C.P."/>
            <person name="Smolka M.B."/>
            <person name="Payne S.H."/>
            <person name="Bafna V."/>
            <person name="Eng J."/>
            <person name="Zhou H."/>
        </authorList>
    </citation>
    <scope>PHOSPHORYLATION [LARGE SCALE ANALYSIS] AT SER-394</scope>
    <scope>IDENTIFICATION BY MASS SPECTROMETRY [LARGE SCALE ANALYSIS]</scope>
</reference>
<reference key="9">
    <citation type="journal article" date="2009" name="Science">
        <title>Global analysis of Cdk1 substrate phosphorylation sites provides insights into evolution.</title>
        <authorList>
            <person name="Holt L.J."/>
            <person name="Tuch B.B."/>
            <person name="Villen J."/>
            <person name="Johnson A.D."/>
            <person name="Gygi S.P."/>
            <person name="Morgan D.O."/>
        </authorList>
    </citation>
    <scope>PHOSPHORYLATION [LARGE SCALE ANALYSIS] AT THR-289; SER-293 AND SER-394</scope>
    <scope>IDENTIFICATION BY MASS SPECTROMETRY [LARGE SCALE ANALYSIS]</scope>
</reference>
<reference key="10">
    <citation type="journal article" date="2004" name="Science">
        <title>Phosphorylation of proteins by inositol pyrophosphates.</title>
        <authorList>
            <person name="Saiardi A."/>
            <person name="Bhandari R."/>
            <person name="Resnick A.C."/>
            <person name="Snowman A.M."/>
            <person name="Snyder S.H."/>
        </authorList>
    </citation>
    <scope>PYROPHOSPHORYLATION</scope>
</reference>
<reference key="11">
    <citation type="journal article" date="2007" name="Proc. Natl. Acad. Sci. U.S.A.">
        <title>Protein pyrophosphorylation by inositol pyrophosphates is a posttranslational event.</title>
        <authorList>
            <person name="Bhandari R."/>
            <person name="Saiardi A."/>
            <person name="Ahmadibeni Y."/>
            <person name="Snowman A.M."/>
            <person name="Resnick A.C."/>
            <person name="Kristiansen T.Z."/>
            <person name="Molina H."/>
            <person name="Pandey A."/>
            <person name="Werner J.K. Jr."/>
            <person name="Juluri K.R."/>
            <person name="Xu Y."/>
            <person name="Prestwich G.D."/>
            <person name="Parang K."/>
            <person name="Snyder S.H."/>
        </authorList>
    </citation>
    <scope>PYROPHOSPHORYLATION</scope>
</reference>
<name>SRP40_YEAST</name>
<evidence type="ECO:0000256" key="1">
    <source>
        <dbReference type="SAM" id="MobiDB-lite"/>
    </source>
</evidence>
<evidence type="ECO:0000269" key="2">
    <source>
    </source>
</evidence>
<evidence type="ECO:0000269" key="3">
    <source>
    </source>
</evidence>
<evidence type="ECO:0000269" key="4">
    <source>
    </source>
</evidence>
<evidence type="ECO:0000305" key="5"/>
<evidence type="ECO:0007744" key="6">
    <source>
    </source>
</evidence>
<evidence type="ECO:0007744" key="7">
    <source>
    </source>
</evidence>
<evidence type="ECO:0007744" key="8">
    <source>
    </source>
</evidence>
<evidence type="ECO:0007744" key="9">
    <source>
    </source>
</evidence>
<sequence length="406" mass="41015">MASKKIKVDEVPKLSVKEKEIEEKSSSSSSSSSSSSSSSSSSSSSSSSSGESSSSSSSSSSSSSSDSSDSSDSESSSSSSSSSSSSSSSSDSESSSESDSSSSGSSSSSSSSSDESSSESESEDETKKRARESDNEDAKETKKAKTEPESSSSSESSSSGSSSSSESESGSESDSDSSSSSSSSSDSESDSESDSQSSSSSSSSDSSSDSDSSSSDSSSDSDSSSSSSSSSSDSDSDSDSSSDSDSSGSSDSSSSSDSSSDESTSSDSSDSDSDSDSGSSSELETKEATADESKAEETPASSNESTPSASSSSSANKLNIPAGTDEIKEGQRKHFSRVDRSKINFEAWELTDNTYKGAAGTWGEKANEKLGRVRGKDFTKNKNKMKRGSYRGGSITLESGSYKFQD</sequence>
<comment type="function">
    <text>Not known; weak suppressor of a mutant of the subunit AC40 of DNA dependent RNA polymerase I and III.</text>
</comment>
<comment type="PTM">
    <text evidence="3 4">Pyrophosphorylated by 5-diphosphoinositol pentakisphosphate (5-IP7) (PubMed:15604408). Serine pyrophosphorylation is achieved by Mg(2+)-dependent, but enzyme independent transfer of a beta-phosphate from a inositol pyrophosphate to a pre-phosphorylated serine residue (PubMed:15604408, PubMed:17873058).</text>
</comment>
<comment type="miscellaneous">
    <text evidence="2">Present with 12900 molecules/cell in log phase SD medium.</text>
</comment>
<gene>
    <name type="primary">SRP40</name>
    <name type="ordered locus">YKR092C</name>
    <name type="ORF">YKR412A</name>
</gene>
<organism>
    <name type="scientific">Saccharomyces cerevisiae (strain ATCC 204508 / S288c)</name>
    <name type="common">Baker's yeast</name>
    <dbReference type="NCBI Taxonomy" id="559292"/>
    <lineage>
        <taxon>Eukaryota</taxon>
        <taxon>Fungi</taxon>
        <taxon>Dikarya</taxon>
        <taxon>Ascomycota</taxon>
        <taxon>Saccharomycotina</taxon>
        <taxon>Saccharomycetes</taxon>
        <taxon>Saccharomycetales</taxon>
        <taxon>Saccharomycetaceae</taxon>
        <taxon>Saccharomyces</taxon>
    </lineage>
</organism>
<keyword id="KW-0597">Phosphoprotein</keyword>
<keyword id="KW-1185">Reference proteome</keyword>
<protein>
    <recommendedName>
        <fullName>Suppressor protein SRP40</fullName>
    </recommendedName>
</protein>
<proteinExistence type="evidence at protein level"/>
<feature type="chain" id="PRO_0000072192" description="Suppressor protein SRP40">
    <location>
        <begin position="1"/>
        <end position="406"/>
    </location>
</feature>
<feature type="region of interest" description="Disordered" evidence="1">
    <location>
        <begin position="1"/>
        <end position="335"/>
    </location>
</feature>
<feature type="compositionally biased region" description="Basic and acidic residues" evidence="1">
    <location>
        <begin position="1"/>
        <end position="25"/>
    </location>
</feature>
<feature type="compositionally biased region" description="Low complexity" evidence="1">
    <location>
        <begin position="26"/>
        <end position="115"/>
    </location>
</feature>
<feature type="compositionally biased region" description="Basic and acidic residues" evidence="1">
    <location>
        <begin position="125"/>
        <end position="148"/>
    </location>
</feature>
<feature type="compositionally biased region" description="Low complexity" evidence="1">
    <location>
        <begin position="149"/>
        <end position="168"/>
    </location>
</feature>
<feature type="compositionally biased region" description="Low complexity" evidence="1">
    <location>
        <begin position="176"/>
        <end position="186"/>
    </location>
</feature>
<feature type="compositionally biased region" description="Low complexity" evidence="1">
    <location>
        <begin position="194"/>
        <end position="233"/>
    </location>
</feature>
<feature type="compositionally biased region" description="Low complexity" evidence="1">
    <location>
        <begin position="243"/>
        <end position="268"/>
    </location>
</feature>
<feature type="compositionally biased region" description="Basic and acidic residues" evidence="1">
    <location>
        <begin position="283"/>
        <end position="297"/>
    </location>
</feature>
<feature type="compositionally biased region" description="Low complexity" evidence="1">
    <location>
        <begin position="298"/>
        <end position="316"/>
    </location>
</feature>
<feature type="compositionally biased region" description="Basic and acidic residues" evidence="1">
    <location>
        <begin position="325"/>
        <end position="335"/>
    </location>
</feature>
<feature type="modified residue" description="Phosphoserine" evidence="6">
    <location>
        <position position="133"/>
    </location>
</feature>
<feature type="modified residue" description="Phosphothreonine" evidence="7 9">
    <location>
        <position position="289"/>
    </location>
</feature>
<feature type="modified residue" description="Phosphoserine" evidence="9">
    <location>
        <position position="293"/>
    </location>
</feature>
<feature type="modified residue" description="Phosphoserine" evidence="6 8 9">
    <location>
        <position position="394"/>
    </location>
</feature>
<feature type="sequence conflict" description="In Ref. 1; AAA35091." evidence="5" ref="1">
    <original>G</original>
    <variation>N</variation>
    <location>
        <position position="400"/>
    </location>
</feature>
<accession>P32583</accession>
<accession>D6VXF2</accession>